<accession>Q5R795</accession>
<protein>
    <recommendedName>
        <fullName>Mitochondrial fission factor</fullName>
    </recommendedName>
</protein>
<feature type="chain" id="PRO_0000289186" description="Mitochondrial fission factor">
    <location>
        <begin position="1"/>
        <end position="218"/>
    </location>
</feature>
<feature type="topological domain" description="Cytoplasmic" evidence="5">
    <location>
        <begin position="1"/>
        <end position="198"/>
    </location>
</feature>
<feature type="transmembrane region" description="Helical; Anchor for type IV membrane protein" evidence="5">
    <location>
        <begin position="199"/>
        <end position="216"/>
    </location>
</feature>
<feature type="topological domain" description="Mitochondrial intermembrane" evidence="5">
    <location>
        <begin position="217"/>
        <end position="218"/>
    </location>
</feature>
<feature type="coiled-coil region" evidence="5">
    <location>
        <begin position="167"/>
        <end position="198"/>
    </location>
</feature>
<feature type="modified residue" description="Phosphothreonine" evidence="4">
    <location>
        <position position="89"/>
    </location>
</feature>
<feature type="modified residue" description="Phosphoserine" evidence="4">
    <location>
        <position position="129"/>
    </location>
</feature>
<feature type="modified residue" description="Phosphoserine" evidence="4">
    <location>
        <position position="131"/>
    </location>
</feature>
<feature type="modified residue" description="Phosphoserine" evidence="3">
    <location>
        <position position="146"/>
    </location>
</feature>
<feature type="modified residue" description="Phosphoserine" evidence="3">
    <location>
        <position position="171"/>
    </location>
</feature>
<dbReference type="EMBL" id="CR860223">
    <property type="protein sequence ID" value="CAH92365.1"/>
    <property type="molecule type" value="mRNA"/>
</dbReference>
<dbReference type="RefSeq" id="NP_001126391.1">
    <property type="nucleotide sequence ID" value="NM_001132919.1"/>
</dbReference>
<dbReference type="RefSeq" id="XP_009236453.2">
    <property type="nucleotide sequence ID" value="XM_009238178.3"/>
</dbReference>
<dbReference type="RefSeq" id="XP_009236459.1">
    <property type="nucleotide sequence ID" value="XM_009238184.1"/>
</dbReference>
<dbReference type="Ensembl" id="ENSPPYT00000034534.1">
    <property type="protein sequence ID" value="ENSPPYP00000036398.1"/>
    <property type="gene ID" value="ENSPPYG00000013238.3"/>
</dbReference>
<dbReference type="GeneID" id="100173373"/>
<dbReference type="KEGG" id="pon:100173373"/>
<dbReference type="CTD" id="56947"/>
<dbReference type="eggNOG" id="ENOG502R96B">
    <property type="taxonomic scope" value="Eukaryota"/>
</dbReference>
<dbReference type="GeneTree" id="ENSGT00390000009776"/>
<dbReference type="InParanoid" id="Q5R795"/>
<dbReference type="OrthoDB" id="5986838at2759"/>
<dbReference type="Proteomes" id="UP000001595">
    <property type="component" value="Chromosome 2B"/>
</dbReference>
<dbReference type="GO" id="GO:0005741">
    <property type="term" value="C:mitochondrial outer membrane"/>
    <property type="evidence" value="ECO:0000250"/>
    <property type="project" value="UniProtKB"/>
</dbReference>
<dbReference type="GO" id="GO:0005777">
    <property type="term" value="C:peroxisome"/>
    <property type="evidence" value="ECO:0000250"/>
    <property type="project" value="UniProtKB"/>
</dbReference>
<dbReference type="GO" id="GO:0008021">
    <property type="term" value="C:synaptic vesicle"/>
    <property type="evidence" value="ECO:0007669"/>
    <property type="project" value="UniProtKB-SubCell"/>
</dbReference>
<dbReference type="GO" id="GO:0042803">
    <property type="term" value="F:protein homodimerization activity"/>
    <property type="evidence" value="ECO:0000250"/>
    <property type="project" value="UniProtKB"/>
</dbReference>
<dbReference type="GO" id="GO:0000266">
    <property type="term" value="P:mitochondrial fission"/>
    <property type="evidence" value="ECO:0000250"/>
    <property type="project" value="UniProtKB"/>
</dbReference>
<dbReference type="GO" id="GO:0090141">
    <property type="term" value="P:positive regulation of mitochondrial fission"/>
    <property type="evidence" value="ECO:0007669"/>
    <property type="project" value="TreeGrafter"/>
</dbReference>
<dbReference type="GO" id="GO:0006626">
    <property type="term" value="P:protein targeting to mitochondrion"/>
    <property type="evidence" value="ECO:0000250"/>
    <property type="project" value="UniProtKB"/>
</dbReference>
<dbReference type="InterPro" id="IPR039433">
    <property type="entry name" value="Mff-like_dom"/>
</dbReference>
<dbReference type="InterPro" id="IPR008518">
    <property type="entry name" value="Mff/Tango-11"/>
</dbReference>
<dbReference type="PANTHER" id="PTHR16501:SF17">
    <property type="entry name" value="MITOCHONDRIAL FISSION FACTOR"/>
    <property type="match status" value="1"/>
</dbReference>
<dbReference type="PANTHER" id="PTHR16501">
    <property type="entry name" value="TRANSPORT AND GOLGI ORGANIZATION PROTEIN 11"/>
    <property type="match status" value="1"/>
</dbReference>
<dbReference type="Pfam" id="PF05644">
    <property type="entry name" value="Miff"/>
    <property type="match status" value="2"/>
</dbReference>
<organism>
    <name type="scientific">Pongo abelii</name>
    <name type="common">Sumatran orangutan</name>
    <name type="synonym">Pongo pygmaeus abelii</name>
    <dbReference type="NCBI Taxonomy" id="9601"/>
    <lineage>
        <taxon>Eukaryota</taxon>
        <taxon>Metazoa</taxon>
        <taxon>Chordata</taxon>
        <taxon>Craniata</taxon>
        <taxon>Vertebrata</taxon>
        <taxon>Euteleostomi</taxon>
        <taxon>Mammalia</taxon>
        <taxon>Eutheria</taxon>
        <taxon>Euarchontoglires</taxon>
        <taxon>Primates</taxon>
        <taxon>Haplorrhini</taxon>
        <taxon>Catarrhini</taxon>
        <taxon>Hominidae</taxon>
        <taxon>Pongo</taxon>
    </lineage>
</organism>
<comment type="function">
    <text evidence="3 4">Plays a role in mitochondrial and peroxisomal fission. Promotes the recruitment and association of the fission mediator dynamin-related protein 1 (DNM1L) to the mitochondrial surface. May be involved in regulation of synaptic vesicle membrane dynamics by recruitment of DNM1L to clathrin-containing vesicles.</text>
</comment>
<comment type="subunit">
    <text evidence="1 3">Homodimer. Interacts with DNM1L. Interacts with C11orf65/MFI; the interaction inhibits MFF interaction with DNM1L.</text>
</comment>
<comment type="subcellular location">
    <subcellularLocation>
        <location evidence="3">Mitochondrion outer membrane</location>
        <topology evidence="5">Single-pass type IV membrane protein</topology>
    </subcellularLocation>
    <subcellularLocation>
        <location evidence="4">Peroxisome</location>
    </subcellularLocation>
    <subcellularLocation>
        <location evidence="2">Cytoplasmic vesicle</location>
        <location evidence="2">Secretory vesicle</location>
        <location evidence="2">Synaptic vesicle</location>
    </subcellularLocation>
</comment>
<comment type="similarity">
    <text evidence="6">Belongs to the Tango11 family.</text>
</comment>
<proteinExistence type="evidence at transcript level"/>
<keyword id="KW-0175">Coiled coil</keyword>
<keyword id="KW-0968">Cytoplasmic vesicle</keyword>
<keyword id="KW-0472">Membrane</keyword>
<keyword id="KW-0496">Mitochondrion</keyword>
<keyword id="KW-1000">Mitochondrion outer membrane</keyword>
<keyword id="KW-0576">Peroxisome</keyword>
<keyword id="KW-0597">Phosphoprotein</keyword>
<keyword id="KW-1185">Reference proteome</keyword>
<keyword id="KW-0770">Synapse</keyword>
<keyword id="KW-0812">Transmembrane</keyword>
<keyword id="KW-1133">Transmembrane helix</keyword>
<gene>
    <name type="primary">MFF</name>
</gene>
<name>MFF_PONAB</name>
<sequence>MAEISRIQYEMEYTEGISQRMRVPEKLKVAPPNADLEQGFQEGVPNASVIMQVPERIVVAGNNEDVSFSRPADLDLIQSTPFKSLALKTPPRVLTLSERPLDFLDLERPPTTPQNEEIRAVGRVKRERSMSENAVRQNGQLVRNDSLYGISNIDTTTEGTSDDLTVVDAASLRRQIIKLNRRLQLLEEENKERAKREMVMYSITVAFWLLNSWLWFRR</sequence>
<evidence type="ECO:0000250" key="1"/>
<evidence type="ECO:0000250" key="2">
    <source>
        <dbReference type="UniProtKB" id="Q4KM98"/>
    </source>
</evidence>
<evidence type="ECO:0000250" key="3">
    <source>
        <dbReference type="UniProtKB" id="Q6PCP5"/>
    </source>
</evidence>
<evidence type="ECO:0000250" key="4">
    <source>
        <dbReference type="UniProtKB" id="Q9GZY8"/>
    </source>
</evidence>
<evidence type="ECO:0000255" key="5"/>
<evidence type="ECO:0000305" key="6"/>
<reference key="1">
    <citation type="submission" date="2004-11" db="EMBL/GenBank/DDBJ databases">
        <authorList>
            <consortium name="The German cDNA consortium"/>
        </authorList>
    </citation>
    <scope>NUCLEOTIDE SEQUENCE [LARGE SCALE MRNA]</scope>
    <source>
        <tissue>Kidney</tissue>
    </source>
</reference>